<keyword id="KW-0240">DNA-directed RNA polymerase</keyword>
<keyword id="KW-0548">Nucleotidyltransferase</keyword>
<keyword id="KW-1185">Reference proteome</keyword>
<keyword id="KW-0804">Transcription</keyword>
<keyword id="KW-0808">Transferase</keyword>
<accession>Q1QL49</accession>
<gene>
    <name evidence="1" type="primary">rpoZ</name>
    <name type="ordered locus">Nham_2256</name>
</gene>
<name>RPOZ_NITHX</name>
<reference key="1">
    <citation type="submission" date="2006-03" db="EMBL/GenBank/DDBJ databases">
        <title>Complete sequence of chromosome of Nitrobacter hamburgensis X14.</title>
        <authorList>
            <consortium name="US DOE Joint Genome Institute"/>
            <person name="Copeland A."/>
            <person name="Lucas S."/>
            <person name="Lapidus A."/>
            <person name="Barry K."/>
            <person name="Detter J.C."/>
            <person name="Glavina del Rio T."/>
            <person name="Hammon N."/>
            <person name="Israni S."/>
            <person name="Dalin E."/>
            <person name="Tice H."/>
            <person name="Pitluck S."/>
            <person name="Chain P."/>
            <person name="Malfatti S."/>
            <person name="Shin M."/>
            <person name="Vergez L."/>
            <person name="Schmutz J."/>
            <person name="Larimer F."/>
            <person name="Land M."/>
            <person name="Hauser L."/>
            <person name="Kyrpides N."/>
            <person name="Ivanova N."/>
            <person name="Ward B."/>
            <person name="Arp D."/>
            <person name="Klotz M."/>
            <person name="Stein L."/>
            <person name="O'Mullan G."/>
            <person name="Starkenburg S."/>
            <person name="Sayavedra L."/>
            <person name="Poret-Peterson A.T."/>
            <person name="Gentry M.E."/>
            <person name="Bruce D."/>
            <person name="Richardson P."/>
        </authorList>
    </citation>
    <scope>NUCLEOTIDE SEQUENCE [LARGE SCALE GENOMIC DNA]</scope>
    <source>
        <strain>DSM 10229 / NCIMB 13809 / X14</strain>
    </source>
</reference>
<sequence length="130" mass="14486">MARVTVEDCIDKVDNRFDLVLLAAHRARMISSGSQLTIDRDNDKNPVVSLREIAEQTISPEDMREELVHSLQKFVEVDEPEPDTVPLIGSAGASVDADDTEVAVERMTEEELLKGLEGLAPREEQPEEDE</sequence>
<evidence type="ECO:0000255" key="1">
    <source>
        <dbReference type="HAMAP-Rule" id="MF_00366"/>
    </source>
</evidence>
<evidence type="ECO:0000256" key="2">
    <source>
        <dbReference type="SAM" id="MobiDB-lite"/>
    </source>
</evidence>
<feature type="chain" id="PRO_1000005966" description="DNA-directed RNA polymerase subunit omega">
    <location>
        <begin position="1"/>
        <end position="130"/>
    </location>
</feature>
<feature type="region of interest" description="Disordered" evidence="2">
    <location>
        <begin position="80"/>
        <end position="99"/>
    </location>
</feature>
<feature type="region of interest" description="Disordered" evidence="2">
    <location>
        <begin position="110"/>
        <end position="130"/>
    </location>
</feature>
<feature type="compositionally biased region" description="Basic and acidic residues" evidence="2">
    <location>
        <begin position="110"/>
        <end position="124"/>
    </location>
</feature>
<comment type="function">
    <text evidence="1">Promotes RNA polymerase assembly. Latches the N- and C-terminal regions of the beta' subunit thereby facilitating its interaction with the beta and alpha subunits.</text>
</comment>
<comment type="catalytic activity">
    <reaction evidence="1">
        <text>RNA(n) + a ribonucleoside 5'-triphosphate = RNA(n+1) + diphosphate</text>
        <dbReference type="Rhea" id="RHEA:21248"/>
        <dbReference type="Rhea" id="RHEA-COMP:14527"/>
        <dbReference type="Rhea" id="RHEA-COMP:17342"/>
        <dbReference type="ChEBI" id="CHEBI:33019"/>
        <dbReference type="ChEBI" id="CHEBI:61557"/>
        <dbReference type="ChEBI" id="CHEBI:140395"/>
        <dbReference type="EC" id="2.7.7.6"/>
    </reaction>
</comment>
<comment type="subunit">
    <text evidence="1">The RNAP catalytic core consists of 2 alpha, 1 beta, 1 beta' and 1 omega subunit. When a sigma factor is associated with the core the holoenzyme is formed, which can initiate transcription.</text>
</comment>
<comment type="similarity">
    <text evidence="1">Belongs to the RNA polymerase subunit omega family.</text>
</comment>
<proteinExistence type="inferred from homology"/>
<organism>
    <name type="scientific">Nitrobacter hamburgensis (strain DSM 10229 / NCIMB 13809 / X14)</name>
    <dbReference type="NCBI Taxonomy" id="323097"/>
    <lineage>
        <taxon>Bacteria</taxon>
        <taxon>Pseudomonadati</taxon>
        <taxon>Pseudomonadota</taxon>
        <taxon>Alphaproteobacteria</taxon>
        <taxon>Hyphomicrobiales</taxon>
        <taxon>Nitrobacteraceae</taxon>
        <taxon>Nitrobacter</taxon>
    </lineage>
</organism>
<dbReference type="EC" id="2.7.7.6" evidence="1"/>
<dbReference type="EMBL" id="CP000319">
    <property type="protein sequence ID" value="ABE63048.1"/>
    <property type="molecule type" value="Genomic_DNA"/>
</dbReference>
<dbReference type="RefSeq" id="WP_011510725.1">
    <property type="nucleotide sequence ID" value="NC_007964.1"/>
</dbReference>
<dbReference type="SMR" id="Q1QL49"/>
<dbReference type="STRING" id="323097.Nham_2256"/>
<dbReference type="KEGG" id="nha:Nham_2256"/>
<dbReference type="eggNOG" id="COG1758">
    <property type="taxonomic scope" value="Bacteria"/>
</dbReference>
<dbReference type="HOGENOM" id="CLU_125406_2_0_5"/>
<dbReference type="OrthoDB" id="9796300at2"/>
<dbReference type="Proteomes" id="UP000001953">
    <property type="component" value="Chromosome"/>
</dbReference>
<dbReference type="GO" id="GO:0000428">
    <property type="term" value="C:DNA-directed RNA polymerase complex"/>
    <property type="evidence" value="ECO:0007669"/>
    <property type="project" value="UniProtKB-KW"/>
</dbReference>
<dbReference type="GO" id="GO:0003677">
    <property type="term" value="F:DNA binding"/>
    <property type="evidence" value="ECO:0007669"/>
    <property type="project" value="UniProtKB-UniRule"/>
</dbReference>
<dbReference type="GO" id="GO:0003899">
    <property type="term" value="F:DNA-directed RNA polymerase activity"/>
    <property type="evidence" value="ECO:0007669"/>
    <property type="project" value="UniProtKB-UniRule"/>
</dbReference>
<dbReference type="GO" id="GO:0006351">
    <property type="term" value="P:DNA-templated transcription"/>
    <property type="evidence" value="ECO:0007669"/>
    <property type="project" value="UniProtKB-UniRule"/>
</dbReference>
<dbReference type="Gene3D" id="3.90.940.10">
    <property type="match status" value="1"/>
</dbReference>
<dbReference type="HAMAP" id="MF_00366">
    <property type="entry name" value="RNApol_bact_RpoZ"/>
    <property type="match status" value="1"/>
</dbReference>
<dbReference type="InterPro" id="IPR003716">
    <property type="entry name" value="DNA-dir_RNA_pol_omega"/>
</dbReference>
<dbReference type="InterPro" id="IPR006110">
    <property type="entry name" value="Pol_omega/Rpo6/RPB6"/>
</dbReference>
<dbReference type="InterPro" id="IPR036161">
    <property type="entry name" value="RPB6/omega-like_sf"/>
</dbReference>
<dbReference type="NCBIfam" id="TIGR00690">
    <property type="entry name" value="rpoZ"/>
    <property type="match status" value="1"/>
</dbReference>
<dbReference type="PANTHER" id="PTHR34476">
    <property type="entry name" value="DNA-DIRECTED RNA POLYMERASE SUBUNIT OMEGA"/>
    <property type="match status" value="1"/>
</dbReference>
<dbReference type="PANTHER" id="PTHR34476:SF1">
    <property type="entry name" value="DNA-DIRECTED RNA POLYMERASE SUBUNIT OMEGA"/>
    <property type="match status" value="1"/>
</dbReference>
<dbReference type="Pfam" id="PF01192">
    <property type="entry name" value="RNA_pol_Rpb6"/>
    <property type="match status" value="1"/>
</dbReference>
<dbReference type="SMART" id="SM01409">
    <property type="entry name" value="RNA_pol_Rpb6"/>
    <property type="match status" value="1"/>
</dbReference>
<dbReference type="SUPFAM" id="SSF63562">
    <property type="entry name" value="RPB6/omega subunit-like"/>
    <property type="match status" value="1"/>
</dbReference>
<protein>
    <recommendedName>
        <fullName evidence="1">DNA-directed RNA polymerase subunit omega</fullName>
        <shortName evidence="1">RNAP omega subunit</shortName>
        <ecNumber evidence="1">2.7.7.6</ecNumber>
    </recommendedName>
    <alternativeName>
        <fullName evidence="1">RNA polymerase omega subunit</fullName>
    </alternativeName>
    <alternativeName>
        <fullName evidence="1">Transcriptase subunit omega</fullName>
    </alternativeName>
</protein>